<accession>Q27518</accession>
<reference key="1">
    <citation type="journal article" date="1998" name="Science">
        <title>Genome sequence of the nematode C. elegans: a platform for investigating biology.</title>
        <authorList>
            <consortium name="The C. elegans sequencing consortium"/>
        </authorList>
    </citation>
    <scope>NUCLEOTIDE SEQUENCE [LARGE SCALE GENOMIC DNA]</scope>
    <source>
        <strain>Bristol N2</strain>
    </source>
</reference>
<keyword id="KW-0349">Heme</keyword>
<keyword id="KW-0408">Iron</keyword>
<keyword id="KW-0479">Metal-binding</keyword>
<keyword id="KW-0503">Monooxygenase</keyword>
<keyword id="KW-0560">Oxidoreductase</keyword>
<keyword id="KW-1185">Reference proteome</keyword>
<comment type="function">
    <text>Cytochromes P450 are a group of heme-thiolate monooxygenases. They oxidize a variety of structurally unrelated compounds, including steroids, fatty acids, and xenobiotics.</text>
</comment>
<comment type="cofactor">
    <cofactor evidence="1">
        <name>heme</name>
        <dbReference type="ChEBI" id="CHEBI:30413"/>
    </cofactor>
</comment>
<comment type="similarity">
    <text evidence="2">Belongs to the cytochrome P450 family.</text>
</comment>
<feature type="chain" id="PRO_0000052262" description="Putative cytochrome P450 CYP13A2">
    <location>
        <begin position="1"/>
        <end position="515"/>
    </location>
</feature>
<feature type="binding site" description="axial binding residue" evidence="1">
    <location>
        <position position="460"/>
    </location>
    <ligand>
        <name>heme</name>
        <dbReference type="ChEBI" id="CHEBI:30413"/>
    </ligand>
    <ligandPart>
        <name>Fe</name>
        <dbReference type="ChEBI" id="CHEBI:18248"/>
    </ligandPart>
</feature>
<gene>
    <name type="primary">cyp-13A2</name>
    <name type="synonym">cyp13a2</name>
    <name type="ORF">T10B9.7</name>
</gene>
<dbReference type="EC" id="1.14.-.-"/>
<dbReference type="EMBL" id="Z48717">
    <property type="protein sequence ID" value="CAA88607.1"/>
    <property type="molecule type" value="Genomic_DNA"/>
</dbReference>
<dbReference type="PIR" id="T24781">
    <property type="entry name" value="T24781"/>
</dbReference>
<dbReference type="RefSeq" id="NP_496109.1">
    <property type="nucleotide sequence ID" value="NM_063708.5"/>
</dbReference>
<dbReference type="SMR" id="Q27518"/>
<dbReference type="BioGRID" id="53027">
    <property type="interactions" value="1"/>
</dbReference>
<dbReference type="DIP" id="DIP-25672N"/>
<dbReference type="FunCoup" id="Q27518">
    <property type="interactions" value="118"/>
</dbReference>
<dbReference type="STRING" id="6239.T10B9.7.1"/>
<dbReference type="PaxDb" id="6239-T10B9.7"/>
<dbReference type="PeptideAtlas" id="Q27518"/>
<dbReference type="EnsemblMetazoa" id="T10B9.7.1">
    <property type="protein sequence ID" value="T10B9.7.1"/>
    <property type="gene ID" value="WBGene00011676"/>
</dbReference>
<dbReference type="GeneID" id="188360"/>
<dbReference type="KEGG" id="cel:CELE_T10B9.7"/>
<dbReference type="UCSC" id="T10B9.7">
    <property type="organism name" value="c. elegans"/>
</dbReference>
<dbReference type="AGR" id="WB:WBGene00011676"/>
<dbReference type="CTD" id="188360"/>
<dbReference type="WormBase" id="T10B9.7">
    <property type="protein sequence ID" value="CE01659"/>
    <property type="gene ID" value="WBGene00011676"/>
    <property type="gene designation" value="cyp-13A2"/>
</dbReference>
<dbReference type="eggNOG" id="KOG0158">
    <property type="taxonomic scope" value="Eukaryota"/>
</dbReference>
<dbReference type="HOGENOM" id="CLU_001570_5_2_1"/>
<dbReference type="InParanoid" id="Q27518"/>
<dbReference type="OMA" id="LICQVFP"/>
<dbReference type="OrthoDB" id="2789670at2759"/>
<dbReference type="PhylomeDB" id="Q27518"/>
<dbReference type="PRO" id="PR:Q27518"/>
<dbReference type="Proteomes" id="UP000001940">
    <property type="component" value="Chromosome II"/>
</dbReference>
<dbReference type="Bgee" id="WBGene00011676">
    <property type="expression patterns" value="Expressed in adult organism and 2 other cell types or tissues"/>
</dbReference>
<dbReference type="GO" id="GO:0020037">
    <property type="term" value="F:heme binding"/>
    <property type="evidence" value="ECO:0007669"/>
    <property type="project" value="InterPro"/>
</dbReference>
<dbReference type="GO" id="GO:0005506">
    <property type="term" value="F:iron ion binding"/>
    <property type="evidence" value="ECO:0007669"/>
    <property type="project" value="InterPro"/>
</dbReference>
<dbReference type="GO" id="GO:0004497">
    <property type="term" value="F:monooxygenase activity"/>
    <property type="evidence" value="ECO:0007669"/>
    <property type="project" value="UniProtKB-KW"/>
</dbReference>
<dbReference type="GO" id="GO:0016705">
    <property type="term" value="F:oxidoreductase activity, acting on paired donors, with incorporation or reduction of molecular oxygen"/>
    <property type="evidence" value="ECO:0007669"/>
    <property type="project" value="InterPro"/>
</dbReference>
<dbReference type="CDD" id="cd11055">
    <property type="entry name" value="CYP3A-like"/>
    <property type="match status" value="1"/>
</dbReference>
<dbReference type="FunFam" id="1.10.630.10:FF:000182">
    <property type="entry name" value="Cytochrome P450 3A4"/>
    <property type="match status" value="1"/>
</dbReference>
<dbReference type="Gene3D" id="1.10.630.10">
    <property type="entry name" value="Cytochrome P450"/>
    <property type="match status" value="1"/>
</dbReference>
<dbReference type="InterPro" id="IPR001128">
    <property type="entry name" value="Cyt_P450"/>
</dbReference>
<dbReference type="InterPro" id="IPR017972">
    <property type="entry name" value="Cyt_P450_CS"/>
</dbReference>
<dbReference type="InterPro" id="IPR002401">
    <property type="entry name" value="Cyt_P450_E_grp-I"/>
</dbReference>
<dbReference type="InterPro" id="IPR036396">
    <property type="entry name" value="Cyt_P450_sf"/>
</dbReference>
<dbReference type="InterPro" id="IPR050705">
    <property type="entry name" value="Cytochrome_P450_3A"/>
</dbReference>
<dbReference type="PANTHER" id="PTHR24302">
    <property type="entry name" value="CYTOCHROME P450 FAMILY 3"/>
    <property type="match status" value="1"/>
</dbReference>
<dbReference type="PANTHER" id="PTHR24302:SF15">
    <property type="entry name" value="FATTY-ACID PEROXYGENASE"/>
    <property type="match status" value="1"/>
</dbReference>
<dbReference type="Pfam" id="PF00067">
    <property type="entry name" value="p450"/>
    <property type="match status" value="1"/>
</dbReference>
<dbReference type="PRINTS" id="PR00463">
    <property type="entry name" value="EP450I"/>
</dbReference>
<dbReference type="PRINTS" id="PR00385">
    <property type="entry name" value="P450"/>
</dbReference>
<dbReference type="SUPFAM" id="SSF48264">
    <property type="entry name" value="Cytochrome P450"/>
    <property type="match status" value="1"/>
</dbReference>
<dbReference type="PROSITE" id="PS00086">
    <property type="entry name" value="CYTOCHROME_P450"/>
    <property type="match status" value="1"/>
</dbReference>
<name>C13A2_CAEEL</name>
<protein>
    <recommendedName>
        <fullName>Putative cytochrome P450 CYP13A2</fullName>
        <ecNumber>1.14.-.-</ecNumber>
    </recommendedName>
</protein>
<proteinExistence type="inferred from homology"/>
<organism>
    <name type="scientific">Caenorhabditis elegans</name>
    <dbReference type="NCBI Taxonomy" id="6239"/>
    <lineage>
        <taxon>Eukaryota</taxon>
        <taxon>Metazoa</taxon>
        <taxon>Ecdysozoa</taxon>
        <taxon>Nematoda</taxon>
        <taxon>Chromadorea</taxon>
        <taxon>Rhabditida</taxon>
        <taxon>Rhabditina</taxon>
        <taxon>Rhabditomorpha</taxon>
        <taxon>Rhabditoidea</taxon>
        <taxon>Rhabditidae</taxon>
        <taxon>Peloderinae</taxon>
        <taxon>Caenorhabditis</taxon>
    </lineage>
</organism>
<evidence type="ECO:0000250" key="1"/>
<evidence type="ECO:0000305" key="2"/>
<sequence length="515" mass="59232">MSLGFVLAVTFSIFLGILTYYLWIWTYWMRKGVKGPRGRPFVGVLDVLLEHETPGLIKLGEWTKKYGKVYGYTDGTQRTLVVADPAMVHEIFVKQFDNFYGRKLNPIQGNPEKEQRVHLLAAQGYRWKRLRTISSQSFSNASLKKMKRTVEDSALELLRHIEKQTAGGEQIDMLRFYQEYTMDVIGRFAMGQTDSMMFKNPIVNVVREIFCGSRKNLMLICQVFPPIGQFIRDLTFKFPRIPAFKLYSIMQDVVAARIAQREREKGAESGEPQDFIDLFLDARSDDVDFSAEAREDFSKRNLKITKELSADEVVGQCFLFLIGGFDTTALSLSYVTYLLAVNPKIQEKVIEEIAREFGTSEVEFEKLGRLKYMDCVIKEALRLYPLASISNSRKCMKTTTVNGVKIEAGVYVQMDTWSLHYDPELWGEDVKEFKPERWSTDEPLEHKGAYLPFGLGPRQCIGMRLAIMEQKILLTHLLKNYTFETGNKTRIPLKLVGSATTSPEDVFVHLRPRIW</sequence>